<accession>P03173</accession>
<sequence>MALGRVGLTVGLWGLLWVGVVVVLANASPGRTITVGPRGNASNAAPSVPRNRSAPRTTPTPPQPRKATKSKASTAKPAPPPKTGPPKTSSEPVRCNRHDPLARYGSRVQIRCRFPNSTRTESRLQIWRYATATDAEIGTAPSLEEVMVNVSAPPGGQLVYDSAPNRTDPHVIWAEGAGPGASPRLYSVVGPLGRQRLIIEELTLETQGMYYWVWGRTDRPSAYGTWVRVRVFRPPSLTIHPHAVLEGQPFKATCTAATYYPGNRAEFVWFEDGRRVFDPAQIHTQTQENPDGFSTVSTVTSAAVGGQGPPRTFTCQLTWHRDSVSFSRRNASGTASVLPRPTITMEFTGDHAVCTAGCVPEGVTFAWFLGDDSSPAEKVAVASQTSCGRPGTATIRSTLPVSYEQTEYICRLAGYPDGIPVLEHHGSHQPPPRDPTERQVIRAVEGAGIGVAVLVAVVLAGTAVVYLTHASSVRYRRLR</sequence>
<proteinExistence type="inferred from homology"/>
<comment type="function">
    <text evidence="1">Major attachment protein that mediates binding of the virus to cell surface heparan sulfate or chondroitin sulfate. Also plays a role in host immune evasion by inhibiting the host complement cascade activation (By similarity).</text>
</comment>
<comment type="subunit">
    <text evidence="1">Interacts with host complement component C3b; this interaction inhibits host immune response by disregulating complement cascade.</text>
</comment>
<comment type="subcellular location">
    <subcellularLocation>
        <location evidence="5">Virion membrane</location>
        <topology evidence="5">Single-pass membrane protein</topology>
    </subcellularLocation>
</comment>
<comment type="miscellaneous">
    <text>There are seven external glycoproteins in HSV-1 and 2: gH, gB, gC, gG, gD, gI, and gE.</text>
</comment>
<comment type="similarity">
    <text evidence="5">Belongs to the herpesviridae glycoprotein C family.</text>
</comment>
<dbReference type="EMBL" id="X01456">
    <property type="protein sequence ID" value="CAA25687.1"/>
    <property type="molecule type" value="Genomic_DNA"/>
</dbReference>
<dbReference type="PIR" id="A03734">
    <property type="entry name" value="VGBEF2"/>
</dbReference>
<dbReference type="GlyCosmos" id="P03173">
    <property type="glycosylation" value="6 sites, No reported glycans"/>
</dbReference>
<dbReference type="GO" id="GO:0016020">
    <property type="term" value="C:membrane"/>
    <property type="evidence" value="ECO:0007669"/>
    <property type="project" value="UniProtKB-KW"/>
</dbReference>
<dbReference type="GO" id="GO:0055036">
    <property type="term" value="C:virion membrane"/>
    <property type="evidence" value="ECO:0007669"/>
    <property type="project" value="UniProtKB-SubCell"/>
</dbReference>
<dbReference type="GO" id="GO:0098671">
    <property type="term" value="P:adhesion receptor-mediated virion attachment to host cell"/>
    <property type="evidence" value="ECO:0007669"/>
    <property type="project" value="UniProtKB-KW"/>
</dbReference>
<dbReference type="GO" id="GO:0046718">
    <property type="term" value="P:symbiont entry into host cell"/>
    <property type="evidence" value="ECO:0007669"/>
    <property type="project" value="UniProtKB-KW"/>
</dbReference>
<dbReference type="GO" id="GO:0042784">
    <property type="term" value="P:symbiont-mediated suppression of host complement activation"/>
    <property type="evidence" value="ECO:0007669"/>
    <property type="project" value="UniProtKB-KW"/>
</dbReference>
<dbReference type="Gene3D" id="2.60.40.10">
    <property type="entry name" value="Immunoglobulins"/>
    <property type="match status" value="1"/>
</dbReference>
<dbReference type="InterPro" id="IPR001038">
    <property type="entry name" value="GA_GC"/>
</dbReference>
<dbReference type="InterPro" id="IPR007110">
    <property type="entry name" value="Ig-like_dom"/>
</dbReference>
<dbReference type="InterPro" id="IPR036179">
    <property type="entry name" value="Ig-like_dom_sf"/>
</dbReference>
<dbReference type="InterPro" id="IPR013783">
    <property type="entry name" value="Ig-like_fold"/>
</dbReference>
<dbReference type="Pfam" id="PF02124">
    <property type="entry name" value="Marek_A"/>
    <property type="match status" value="1"/>
</dbReference>
<dbReference type="PRINTS" id="PR00668">
    <property type="entry name" value="GLYCPROTEINC"/>
</dbReference>
<dbReference type="SUPFAM" id="SSF48726">
    <property type="entry name" value="Immunoglobulin"/>
    <property type="match status" value="1"/>
</dbReference>
<dbReference type="PROSITE" id="PS50835">
    <property type="entry name" value="IG_LIKE"/>
    <property type="match status" value="1"/>
</dbReference>
<feature type="signal peptide" evidence="2">
    <location>
        <begin position="1"/>
        <end position="27"/>
    </location>
</feature>
<feature type="chain" id="PRO_0000038200" description="Envelope glycoprotein C">
    <location>
        <begin position="28"/>
        <end position="479"/>
    </location>
</feature>
<feature type="topological domain" description="Virion surface" evidence="2">
    <location>
        <begin position="28"/>
        <end position="446"/>
    </location>
</feature>
<feature type="transmembrane region" description="Helical" evidence="2">
    <location>
        <begin position="447"/>
        <end position="467"/>
    </location>
</feature>
<feature type="topological domain" description="Cytoplasmic" evidence="2">
    <location>
        <begin position="468"/>
        <end position="479"/>
    </location>
</feature>
<feature type="domain" description="Ig-like">
    <location>
        <begin position="235"/>
        <end position="327"/>
    </location>
</feature>
<feature type="region of interest" description="Disordered" evidence="4">
    <location>
        <begin position="30"/>
        <end position="100"/>
    </location>
</feature>
<feature type="region of interest" description="Heparin-binding domain" evidence="1">
    <location>
        <begin position="105"/>
        <end position="119"/>
    </location>
</feature>
<feature type="glycosylation site" description="N-linked (GlcNAc...) asparagine; by host" evidence="2">
    <location>
        <position position="40"/>
    </location>
</feature>
<feature type="glycosylation site" description="N-linked (GlcNAc...) asparagine; by host" evidence="2">
    <location>
        <position position="51"/>
    </location>
</feature>
<feature type="glycosylation site" description="N-linked (GlcNAc...) asparagine; by host" evidence="2">
    <location>
        <position position="116"/>
    </location>
</feature>
<feature type="glycosylation site" description="N-linked (GlcNAc...) asparagine; by host" evidence="2">
    <location>
        <position position="149"/>
    </location>
</feature>
<feature type="glycosylation site" description="N-linked (GlcNAc...) asparagine; by host" evidence="2">
    <location>
        <position position="165"/>
    </location>
</feature>
<feature type="glycosylation site" description="N-linked (GlcNAc...) asparagine; by host" evidence="2">
    <location>
        <position position="330"/>
    </location>
</feature>
<feature type="disulfide bond" evidence="3">
    <location>
        <begin position="95"/>
        <end position="112"/>
    </location>
</feature>
<feature type="disulfide bond" evidence="3">
    <location>
        <begin position="254"/>
        <end position="315"/>
    </location>
</feature>
<feature type="disulfide bond" evidence="3">
    <location>
        <begin position="354"/>
        <end position="410"/>
    </location>
</feature>
<feature type="disulfide bond" evidence="3">
    <location>
        <begin position="358"/>
        <end position="387"/>
    </location>
</feature>
<keyword id="KW-1015">Disulfide bond</keyword>
<keyword id="KW-0325">Glycoprotein</keyword>
<keyword id="KW-0945">Host-virus interaction</keyword>
<keyword id="KW-0393">Immunoglobulin domain</keyword>
<keyword id="KW-1087">Inhibition of host complement factors by virus</keyword>
<keyword id="KW-0472">Membrane</keyword>
<keyword id="KW-0732">Signal</keyword>
<keyword id="KW-0812">Transmembrane</keyword>
<keyword id="KW-1133">Transmembrane helix</keyword>
<keyword id="KW-1233">Viral attachment to host adhesion receptor</keyword>
<keyword id="KW-1161">Viral attachment to host cell</keyword>
<keyword id="KW-0899">Viral immunoevasion</keyword>
<keyword id="KW-0946">Virion</keyword>
<keyword id="KW-1160">Virus entry into host cell</keyword>
<evidence type="ECO:0000250" key="1"/>
<evidence type="ECO:0000255" key="2"/>
<evidence type="ECO:0000255" key="3">
    <source>
        <dbReference type="PROSITE-ProRule" id="PRU00114"/>
    </source>
</evidence>
<evidence type="ECO:0000256" key="4">
    <source>
        <dbReference type="SAM" id="MobiDB-lite"/>
    </source>
</evidence>
<evidence type="ECO:0000305" key="5"/>
<organism>
    <name type="scientific">Human herpesvirus 2 (strain G)</name>
    <name type="common">HHV-2</name>
    <name type="synonym">Human herpes simplex virus 2</name>
    <dbReference type="NCBI Taxonomy" id="10314"/>
    <lineage>
        <taxon>Viruses</taxon>
        <taxon>Duplodnaviria</taxon>
        <taxon>Heunggongvirae</taxon>
        <taxon>Peploviricota</taxon>
        <taxon>Herviviricetes</taxon>
        <taxon>Herpesvirales</taxon>
        <taxon>Orthoherpesviridae</taxon>
        <taxon>Alphaherpesvirinae</taxon>
        <taxon>Simplexvirus</taxon>
        <taxon>Simplexvirus humanalpha2</taxon>
        <taxon>Human herpesvirus 2</taxon>
    </lineage>
</organism>
<gene>
    <name type="primary">gC</name>
    <name type="synonym">UL44</name>
</gene>
<organismHost>
    <name type="scientific">Homo sapiens</name>
    <name type="common">Human</name>
    <dbReference type="NCBI Taxonomy" id="9606"/>
</organismHost>
<reference key="1">
    <citation type="journal article" date="1984" name="J. Virol.">
        <title>Extensive homology between the herpes simplex virus type 2 glycoprotein F gene and the herpes simplex virus type 1 glycoprotein C gene.</title>
        <authorList>
            <person name="Dowbenko D.J."/>
            <person name="Lasky L.A."/>
        </authorList>
    </citation>
    <scope>NUCLEOTIDE SEQUENCE [GENOMIC DNA]</scope>
</reference>
<name>GC_HHV2G</name>
<protein>
    <recommendedName>
        <fullName>Envelope glycoprotein C</fullName>
    </recommendedName>
    <alternativeName>
        <fullName>Glycoprotein F</fullName>
    </alternativeName>
</protein>